<protein>
    <recommendedName>
        <fullName evidence="1">FAD:protein FMN transferase</fullName>
        <ecNumber evidence="1">2.7.1.180</ecNumber>
    </recommendedName>
    <alternativeName>
        <fullName evidence="1">Flavin transferase</fullName>
    </alternativeName>
</protein>
<accession>Q89AP6</accession>
<comment type="function">
    <text evidence="1">Flavin transferase that catalyzes the transfer of the FMN moiety of FAD and its covalent binding to the hydroxyl group of a threonine residue in a target flavoprotein such as NqrB and NqrC, two subunits of the NQR complex.</text>
</comment>
<comment type="catalytic activity">
    <reaction evidence="1">
        <text>L-threonyl-[protein] + FAD = FMN-L-threonyl-[protein] + AMP + H(+)</text>
        <dbReference type="Rhea" id="RHEA:36847"/>
        <dbReference type="Rhea" id="RHEA-COMP:11060"/>
        <dbReference type="Rhea" id="RHEA-COMP:11061"/>
        <dbReference type="ChEBI" id="CHEBI:15378"/>
        <dbReference type="ChEBI" id="CHEBI:30013"/>
        <dbReference type="ChEBI" id="CHEBI:57692"/>
        <dbReference type="ChEBI" id="CHEBI:74257"/>
        <dbReference type="ChEBI" id="CHEBI:456215"/>
        <dbReference type="EC" id="2.7.1.180"/>
    </reaction>
</comment>
<comment type="cofactor">
    <cofactor evidence="1">
        <name>Mg(2+)</name>
        <dbReference type="ChEBI" id="CHEBI:18420"/>
    </cofactor>
</comment>
<comment type="subcellular location">
    <subcellularLocation>
        <location evidence="4 6">Cell inner membrane</location>
        <topology evidence="4 6">Lipid-anchor</topology>
        <orientation evidence="4">Periplasmic side</orientation>
    </subcellularLocation>
</comment>
<comment type="similarity">
    <text evidence="7">Belongs to the ApbE family.</text>
</comment>
<reference key="1">
    <citation type="journal article" date="2003" name="Proc. Natl. Acad. Sci. U.S.A.">
        <title>Reductive genome evolution in Buchnera aphidicola.</title>
        <authorList>
            <person name="van Ham R.C.H.J."/>
            <person name="Kamerbeek J."/>
            <person name="Palacios C."/>
            <person name="Rausell C."/>
            <person name="Abascal F."/>
            <person name="Bastolla U."/>
            <person name="Fernandez J.M."/>
            <person name="Jimenez L."/>
            <person name="Postigo M."/>
            <person name="Silva F.J."/>
            <person name="Tamames J."/>
            <person name="Viguera E."/>
            <person name="Latorre A."/>
            <person name="Valencia A."/>
            <person name="Moran F."/>
            <person name="Moya A."/>
        </authorList>
    </citation>
    <scope>NUCLEOTIDE SEQUENCE [LARGE SCALE GENOMIC DNA]</scope>
    <source>
        <strain>Bp</strain>
    </source>
</reference>
<gene>
    <name type="primary">apbE</name>
    <name type="ordered locus">bbp_209</name>
</gene>
<organism>
    <name type="scientific">Buchnera aphidicola subsp. Baizongia pistaciae (strain Bp)</name>
    <dbReference type="NCBI Taxonomy" id="224915"/>
    <lineage>
        <taxon>Bacteria</taxon>
        <taxon>Pseudomonadati</taxon>
        <taxon>Pseudomonadota</taxon>
        <taxon>Gammaproteobacteria</taxon>
        <taxon>Enterobacterales</taxon>
        <taxon>Erwiniaceae</taxon>
        <taxon>Buchnera</taxon>
    </lineage>
</organism>
<feature type="signal peptide" evidence="5">
    <location>
        <begin position="1"/>
        <end position="17"/>
    </location>
</feature>
<feature type="chain" id="PRO_0000001753" description="FAD:protein FMN transferase">
    <location>
        <begin position="18"/>
        <end position="341"/>
    </location>
</feature>
<feature type="binding site" evidence="4">
    <location>
        <position position="36"/>
    </location>
    <ligand>
        <name>FAD</name>
        <dbReference type="ChEBI" id="CHEBI:57692"/>
    </ligand>
</feature>
<feature type="binding site" evidence="4">
    <location>
        <position position="73"/>
    </location>
    <ligand>
        <name>FAD</name>
        <dbReference type="ChEBI" id="CHEBI:57692"/>
    </ligand>
</feature>
<feature type="binding site" evidence="4">
    <location>
        <begin position="114"/>
        <end position="116"/>
    </location>
    <ligand>
        <name>FAD</name>
        <dbReference type="ChEBI" id="CHEBI:57692"/>
    </ligand>
</feature>
<feature type="binding site" evidence="4">
    <location>
        <position position="176"/>
    </location>
    <ligand>
        <name>FAD</name>
        <dbReference type="ChEBI" id="CHEBI:57692"/>
    </ligand>
</feature>
<feature type="binding site" evidence="3">
    <location>
        <position position="179"/>
    </location>
    <ligand>
        <name>Mg(2+)</name>
        <dbReference type="ChEBI" id="CHEBI:18420"/>
    </ligand>
</feature>
<feature type="binding site" evidence="4">
    <location>
        <position position="182"/>
    </location>
    <ligand>
        <name>FAD</name>
        <dbReference type="ChEBI" id="CHEBI:57692"/>
    </ligand>
</feature>
<feature type="binding site" evidence="4">
    <location>
        <position position="266"/>
    </location>
    <ligand>
        <name>FAD</name>
        <dbReference type="ChEBI" id="CHEBI:57692"/>
    </ligand>
</feature>
<feature type="binding site" evidence="2">
    <location>
        <position position="292"/>
    </location>
    <ligand>
        <name>Mg(2+)</name>
        <dbReference type="ChEBI" id="CHEBI:18420"/>
    </ligand>
</feature>
<feature type="binding site" evidence="3">
    <location>
        <position position="295"/>
    </location>
    <ligand>
        <name>Mg(2+)</name>
        <dbReference type="ChEBI" id="CHEBI:18420"/>
    </ligand>
</feature>
<feature type="binding site" evidence="2">
    <location>
        <position position="296"/>
    </location>
    <ligand>
        <name>Mg(2+)</name>
        <dbReference type="ChEBI" id="CHEBI:18420"/>
    </ligand>
</feature>
<evidence type="ECO:0000250" key="1">
    <source>
        <dbReference type="UniProtKB" id="A5F5Y3"/>
    </source>
</evidence>
<evidence type="ECO:0000250" key="2">
    <source>
        <dbReference type="UniProtKB" id="O83774"/>
    </source>
</evidence>
<evidence type="ECO:0000250" key="3">
    <source>
        <dbReference type="UniProtKB" id="P0AB85"/>
    </source>
</evidence>
<evidence type="ECO:0000250" key="4">
    <source>
        <dbReference type="UniProtKB" id="P41780"/>
    </source>
</evidence>
<evidence type="ECO:0000255" key="5"/>
<evidence type="ECO:0000255" key="6">
    <source>
        <dbReference type="PROSITE-ProRule" id="PRU00303"/>
    </source>
</evidence>
<evidence type="ECO:0000305" key="7"/>
<dbReference type="EC" id="2.7.1.180" evidence="1"/>
<dbReference type="EMBL" id="AE016826">
    <property type="protein sequence ID" value="AAO26941.1"/>
    <property type="molecule type" value="Genomic_DNA"/>
</dbReference>
<dbReference type="RefSeq" id="WP_011091342.1">
    <property type="nucleotide sequence ID" value="NC_004545.1"/>
</dbReference>
<dbReference type="SMR" id="Q89AP6"/>
<dbReference type="STRING" id="224915.bbp_209"/>
<dbReference type="KEGG" id="bab:bbp_209"/>
<dbReference type="eggNOG" id="COG1477">
    <property type="taxonomic scope" value="Bacteria"/>
</dbReference>
<dbReference type="HOGENOM" id="CLU_044403_0_0_6"/>
<dbReference type="OrthoDB" id="9778595at2"/>
<dbReference type="Proteomes" id="UP000000601">
    <property type="component" value="Chromosome"/>
</dbReference>
<dbReference type="GO" id="GO:0005886">
    <property type="term" value="C:plasma membrane"/>
    <property type="evidence" value="ECO:0007669"/>
    <property type="project" value="UniProtKB-SubCell"/>
</dbReference>
<dbReference type="GO" id="GO:0046872">
    <property type="term" value="F:metal ion binding"/>
    <property type="evidence" value="ECO:0007669"/>
    <property type="project" value="UniProtKB-KW"/>
</dbReference>
<dbReference type="GO" id="GO:0016740">
    <property type="term" value="F:transferase activity"/>
    <property type="evidence" value="ECO:0007669"/>
    <property type="project" value="UniProtKB-KW"/>
</dbReference>
<dbReference type="Gene3D" id="3.10.520.10">
    <property type="entry name" value="ApbE-like domains"/>
    <property type="match status" value="1"/>
</dbReference>
<dbReference type="InterPro" id="IPR024932">
    <property type="entry name" value="ApbE"/>
</dbReference>
<dbReference type="InterPro" id="IPR003374">
    <property type="entry name" value="ApbE-like_sf"/>
</dbReference>
<dbReference type="PANTHER" id="PTHR30040:SF2">
    <property type="entry name" value="FAD:PROTEIN FMN TRANSFERASE"/>
    <property type="match status" value="1"/>
</dbReference>
<dbReference type="PANTHER" id="PTHR30040">
    <property type="entry name" value="THIAMINE BIOSYNTHESIS LIPOPROTEIN APBE"/>
    <property type="match status" value="1"/>
</dbReference>
<dbReference type="Pfam" id="PF02424">
    <property type="entry name" value="ApbE"/>
    <property type="match status" value="1"/>
</dbReference>
<dbReference type="PIRSF" id="PIRSF006268">
    <property type="entry name" value="ApbE"/>
    <property type="match status" value="1"/>
</dbReference>
<dbReference type="SUPFAM" id="SSF143631">
    <property type="entry name" value="ApbE-like"/>
    <property type="match status" value="1"/>
</dbReference>
<sequence>MAYVINICILYFLIISIQINKVQKKYETVFLCGYTMGTTWKVKIINNRHLTYYNLKKKIEKQLCYDNNQISSWNKNSDISNFNKNFTTKPQKINKNLAKLISIGLLVGKKTNNLLDITSGTLINIWGFGPTSRKHSIPSKKTIKLAQMLTGLNHIKLLINKQQYYLQKDIPKLQINLSTLGEGFAADNLKRILDDEGINDYYISIGGTVVTHTSPKNSQNKIIAIQKPTETDNEIHCLISLKNNAVSTSGTYRNYYTLHKKIIHIINPITGNPANTDLVSVTVISKSALKSDAWDTGLILLGFRQAKKISIQEKLAVCLIKKNKSTLFTWTSPQFKKFLIK</sequence>
<proteinExistence type="inferred from homology"/>
<keyword id="KW-0997">Cell inner membrane</keyword>
<keyword id="KW-1003">Cell membrane</keyword>
<keyword id="KW-0274">FAD</keyword>
<keyword id="KW-0285">Flavoprotein</keyword>
<keyword id="KW-0449">Lipoprotein</keyword>
<keyword id="KW-0460">Magnesium</keyword>
<keyword id="KW-0472">Membrane</keyword>
<keyword id="KW-0479">Metal-binding</keyword>
<keyword id="KW-1185">Reference proteome</keyword>
<keyword id="KW-0732">Signal</keyword>
<keyword id="KW-0808">Transferase</keyword>
<name>APBE_BUCBP</name>